<comment type="function">
    <text evidence="1">In elementary bodies (EBs, the infectious stage, which is able to survive outside the host cell) provides the structural integrity of the outer envelope through disulfide cross-links with the small cysteine-rich protein and the large cysteine-rich periplasmic protein. It has been described in publications as the Sarkosyl-insoluble COMC (Chlamydia outer membrane complex), and serves as the functional equivalent of peptidoglycan (By similarity).</text>
</comment>
<comment type="function">
    <text evidence="1">Permits diffusion of specific solutes through the outer membrane.</text>
</comment>
<comment type="subunit">
    <text>Part of a disulfide cross-linked outer membrane complex (COMC) composed of the major outer membrane porin (MOMP), the small cysteine-rich protein (OmcA) and the large cysteine-rich periplasmic protein (OmcB).</text>
</comment>
<comment type="subcellular location">
    <subcellularLocation>
        <location evidence="1">Cell outer membrane</location>
        <topology evidence="1">Multi-pass membrane protein</topology>
    </subcellularLocation>
</comment>
<comment type="developmental stage">
    <text>It is present but some of the disulfide bonds are reduced in reticulate bodies (RBs).</text>
</comment>
<comment type="similarity">
    <text evidence="2">Belongs to the chlamydial porin (CP) (TC 1.B.2) family.</text>
</comment>
<protein>
    <recommendedName>
        <fullName>Major outer membrane porin, serovar E</fullName>
        <shortName>MOMP</shortName>
    </recommendedName>
</protein>
<reference key="1">
    <citation type="journal article" date="1990" name="Nucleic Acids Res.">
        <title>The major outer membrane protein nucleotide sequence of Chlamydia trachomatis, serovar E.</title>
        <authorList>
            <person name="Peterson E.M."/>
            <person name="Markoff B.A."/>
            <person name="de la Maza L.M."/>
        </authorList>
    </citation>
    <scope>NUCLEOTIDE SEQUENCE [GENOMIC DNA]</scope>
    <source>
        <strain>BOUR / Serovar E</strain>
    </source>
</reference>
<name>MOMPE_CHLTH</name>
<evidence type="ECO:0000250" key="1"/>
<evidence type="ECO:0000305" key="2"/>
<keyword id="KW-0998">Cell outer membrane</keyword>
<keyword id="KW-0133">Cell shape</keyword>
<keyword id="KW-1015">Disulfide bond</keyword>
<keyword id="KW-0406">Ion transport</keyword>
<keyword id="KW-0472">Membrane</keyword>
<keyword id="KW-0626">Porin</keyword>
<keyword id="KW-0732">Signal</keyword>
<keyword id="KW-0812">Transmembrane</keyword>
<keyword id="KW-1134">Transmembrane beta strand</keyword>
<keyword id="KW-0813">Transport</keyword>
<sequence>MKKLLKSVLVFAALSSASSLQALPVGNPAEPSLMIDGILWEGFGGDPCDPCTTWCDAISMRMGYYGDFVFDRVLKTDVNKEFQMGDKPTSTTGNATAPTTLTARENPAYGRHMQDAEMFTNAACMALNIWDRFDVFCTLGASSGYLKGNSASFNLVGLFGDNENQSTVKTNSVPNMSLDQSVVELYTDTAFSWSVGARAALWECGCATLGASFQYAQSKPKVEELNVLCNAAEFTINKPKGYVGQEFPLALIAGTDAATGTKDASIDYHEWQASLALSYRLNMFTPYIGVKWSRASFDADTIRIAQPKSATAIFDTTTLNPTIAGAGDVKASAEGQLGDTMQIVSLQLNKMKSRKSCGIAVGTTIVDADKYAVTVETRLIDERAAHVNAQFRF</sequence>
<organism>
    <name type="scientific">Chlamydia trachomatis</name>
    <dbReference type="NCBI Taxonomy" id="813"/>
    <lineage>
        <taxon>Bacteria</taxon>
        <taxon>Pseudomonadati</taxon>
        <taxon>Chlamydiota</taxon>
        <taxon>Chlamydiia</taxon>
        <taxon>Chlamydiales</taxon>
        <taxon>Chlamydiaceae</taxon>
        <taxon>Chlamydia/Chlamydophila group</taxon>
        <taxon>Chlamydia</taxon>
    </lineage>
</organism>
<proteinExistence type="evidence at transcript level"/>
<gene>
    <name type="primary">ompA</name>
    <name type="synonym">omp1E</name>
</gene>
<feature type="signal peptide">
    <location>
        <begin position="1"/>
        <end position="22"/>
    </location>
</feature>
<feature type="chain" id="PRO_0000020148" description="Major outer membrane porin, serovar E">
    <location>
        <begin position="23"/>
        <end position="393"/>
    </location>
</feature>
<dbReference type="EMBL" id="X52557">
    <property type="protein sequence ID" value="CAA36791.1"/>
    <property type="molecule type" value="Genomic_DNA"/>
</dbReference>
<dbReference type="PIR" id="S10201">
    <property type="entry name" value="MMCWTE"/>
</dbReference>
<dbReference type="RefSeq" id="WP_014541299.1">
    <property type="nucleotide sequence ID" value="NZ_JPNI01000003.1"/>
</dbReference>
<dbReference type="OMA" id="ADKWSIT"/>
<dbReference type="GO" id="GO:0009279">
    <property type="term" value="C:cell outer membrane"/>
    <property type="evidence" value="ECO:0007669"/>
    <property type="project" value="UniProtKB-SubCell"/>
</dbReference>
<dbReference type="GO" id="GO:0046930">
    <property type="term" value="C:pore complex"/>
    <property type="evidence" value="ECO:0007669"/>
    <property type="project" value="UniProtKB-KW"/>
</dbReference>
<dbReference type="GO" id="GO:0015288">
    <property type="term" value="F:porin activity"/>
    <property type="evidence" value="ECO:0007669"/>
    <property type="project" value="UniProtKB-KW"/>
</dbReference>
<dbReference type="GO" id="GO:0005198">
    <property type="term" value="F:structural molecule activity"/>
    <property type="evidence" value="ECO:0007669"/>
    <property type="project" value="InterPro"/>
</dbReference>
<dbReference type="GO" id="GO:0006811">
    <property type="term" value="P:monoatomic ion transport"/>
    <property type="evidence" value="ECO:0007669"/>
    <property type="project" value="UniProtKB-KW"/>
</dbReference>
<dbReference type="GO" id="GO:0008360">
    <property type="term" value="P:regulation of cell shape"/>
    <property type="evidence" value="ECO:0007669"/>
    <property type="project" value="UniProtKB-KW"/>
</dbReference>
<dbReference type="InterPro" id="IPR000604">
    <property type="entry name" value="Major_OMP_Chlamydia"/>
</dbReference>
<dbReference type="Pfam" id="PF01308">
    <property type="entry name" value="Chlam_OMP"/>
    <property type="match status" value="1"/>
</dbReference>
<dbReference type="PRINTS" id="PR01334">
    <property type="entry name" value="CHLAMIDIAOMP"/>
</dbReference>
<accession>P17451</accession>